<feature type="transit peptide" description="Chloroplast" evidence="2">
    <location>
        <begin position="1"/>
        <end status="unknown"/>
    </location>
</feature>
<feature type="transit peptide" description="Thylakoid" evidence="6">
    <location>
        <begin status="unknown"/>
        <end position="67"/>
    </location>
</feature>
<feature type="chain" id="PRO_0000285109" description="Peroxiredoxin Q, chloroplastic">
    <location>
        <begin position="68"/>
        <end position="216"/>
    </location>
</feature>
<feature type="domain" description="Thioredoxin" evidence="3">
    <location>
        <begin position="69"/>
        <end position="216"/>
    </location>
</feature>
<feature type="active site" description="Cysteine sulfenic acid (-SOH) intermediate" evidence="1">
    <location>
        <position position="111"/>
    </location>
</feature>
<feature type="disulfide bond" description="Redox-active" evidence="1">
    <location>
        <begin position="111"/>
        <end position="116"/>
    </location>
</feature>
<keyword id="KW-0025">Alternative splicing</keyword>
<keyword id="KW-0049">Antioxidant</keyword>
<keyword id="KW-0150">Chloroplast</keyword>
<keyword id="KW-0903">Direct protein sequencing</keyword>
<keyword id="KW-1015">Disulfide bond</keyword>
<keyword id="KW-0560">Oxidoreductase</keyword>
<keyword id="KW-0575">Peroxidase</keyword>
<keyword id="KW-0934">Plastid</keyword>
<keyword id="KW-0676">Redox-active center</keyword>
<keyword id="KW-1185">Reference proteome</keyword>
<keyword id="KW-0793">Thylakoid</keyword>
<keyword id="KW-0809">Transit peptide</keyword>
<comment type="function">
    <text evidence="4 7 8">Thiol-specific peroxidase that catalyzes the reduction of hydrogen peroxide and organic hydroperoxides to water and alcohols, respectively. Plays a role in cell protection against oxidative stress by detoxifying peroxides. Involved in the photosystem II protection against hydrogen peroxide.</text>
</comment>
<comment type="catalytic activity">
    <reaction evidence="8">
        <text>a hydroperoxide + [thioredoxin]-dithiol = an alcohol + [thioredoxin]-disulfide + H2O</text>
        <dbReference type="Rhea" id="RHEA:62620"/>
        <dbReference type="Rhea" id="RHEA-COMP:10698"/>
        <dbReference type="Rhea" id="RHEA-COMP:10700"/>
        <dbReference type="ChEBI" id="CHEBI:15377"/>
        <dbReference type="ChEBI" id="CHEBI:29950"/>
        <dbReference type="ChEBI" id="CHEBI:30879"/>
        <dbReference type="ChEBI" id="CHEBI:35924"/>
        <dbReference type="ChEBI" id="CHEBI:50058"/>
        <dbReference type="EC" id="1.11.1.24"/>
    </reaction>
</comment>
<comment type="biophysicochemical properties">
    <kinetics>
        <KM evidence="8">254 uM for H(2)O(2)</KM>
        <KM evidence="8">1.09 uM for thioredoxin</KM>
        <text>kcat is 4.5 sec(-1) for H(2)O(2). kcat is 2.75 sec(-1) for thioredoxin.</text>
    </kinetics>
    <phDependence>
        <text evidence="8">Optimum pH is 8.0.</text>
    </phDependence>
    <temperatureDependence>
        <text evidence="8">Optimum temperature is 40 degrees Celsius.</text>
    </temperatureDependence>
</comment>
<comment type="subunit">
    <text evidence="4 8">Monomer; Interacts with the plastidial thioredoxin CDSP32.</text>
</comment>
<comment type="interaction">
    <interactant intactId="EBI-540311">
        <id>Q9LU86</id>
    </interactant>
    <interactant intactId="EBI-368542">
        <id>P0AA25</id>
        <label>trxA</label>
    </interactant>
    <organismsDiffer>true</organismsDiffer>
    <experiments>2</experiments>
</comment>
<comment type="interaction">
    <interactant intactId="EBI-540311">
        <id>Q9LU86</id>
    </interactant>
    <interactant intactId="EBI-537449">
        <id>P07591</id>
    </interactant>
    <organismsDiffer>true</organismsDiffer>
    <experiments>2</experiments>
</comment>
<comment type="subcellular location">
    <subcellularLocation>
        <location evidence="7">Plastid</location>
        <location evidence="7">Chloroplast thylakoid lumen</location>
    </subcellularLocation>
</comment>
<comment type="alternative products">
    <event type="alternative splicing"/>
    <isoform>
        <id>Q9LU86-1</id>
        <name>1</name>
        <sequence type="displayed"/>
    </isoform>
    <text>A number of isoforms are produced. According to EST sequences.</text>
</comment>
<comment type="tissue specificity">
    <text evidence="7 9">Expressed in all tissues at the exception of roots.</text>
</comment>
<comment type="induction">
    <text evidence="5 9">Highly induced by oxidative stress. Down-regulated by salt stress and by ascorbate.</text>
</comment>
<comment type="miscellaneous">
    <text evidence="1">The active site is a conserved redox-active cysteine residue, the peroxidatic cysteine (C(P)), which makes the nucleophilic attack on the peroxide substrate. The peroxide oxidizes the C(P)-SH to cysteine sulfenic acid (C(P)-SOH), which then reacts with another cysteine residue, the resolving cysteine (C(R)), to form a disulfide bridge. The disulfide is subsequently reduced by an appropriate electron donor to complete the catalytic cycle. In this atypical 2-Cys peroxiredoxin, C(R) is present in the same subunit to form an intramolecular disulfide. The disulfide is subsequently reduced by thioredoxin.</text>
</comment>
<comment type="similarity">
    <text evidence="10">Belongs to the peroxiredoxin family. BCP/PrxQ subfamily.</text>
</comment>
<dbReference type="EC" id="1.11.1.24" evidence="8"/>
<dbReference type="EMBL" id="AB023041">
    <property type="protein sequence ID" value="BAB01069.1"/>
    <property type="molecule type" value="Genomic_DNA"/>
</dbReference>
<dbReference type="EMBL" id="CP002686">
    <property type="protein sequence ID" value="AEE77109.1"/>
    <property type="molecule type" value="Genomic_DNA"/>
</dbReference>
<dbReference type="EMBL" id="AY048264">
    <property type="protein sequence ID" value="AAK82526.1"/>
    <property type="molecule type" value="mRNA"/>
</dbReference>
<dbReference type="EMBL" id="AY072626">
    <property type="protein sequence ID" value="AAL62017.1"/>
    <property type="molecule type" value="mRNA"/>
</dbReference>
<dbReference type="RefSeq" id="NP_189235.1">
    <molecule id="Q9LU86-1"/>
    <property type="nucleotide sequence ID" value="NM_113510.5"/>
</dbReference>
<dbReference type="SMR" id="Q9LU86"/>
<dbReference type="BioGRID" id="7534">
    <property type="interactions" value="3"/>
</dbReference>
<dbReference type="FunCoup" id="Q9LU86">
    <property type="interactions" value="920"/>
</dbReference>
<dbReference type="IntAct" id="Q9LU86">
    <property type="interactions" value="3"/>
</dbReference>
<dbReference type="STRING" id="3702.Q9LU86"/>
<dbReference type="PeroxiBase" id="4015">
    <property type="entry name" value="AtPrxQ"/>
</dbReference>
<dbReference type="iPTMnet" id="Q9LU86"/>
<dbReference type="PaxDb" id="3702-AT3G26060.2"/>
<dbReference type="ProteomicsDB" id="226482">
    <molecule id="Q9LU86-1"/>
</dbReference>
<dbReference type="EnsemblPlants" id="AT3G26060.1">
    <molecule id="Q9LU86-1"/>
    <property type="protein sequence ID" value="AT3G26060.1"/>
    <property type="gene ID" value="AT3G26060"/>
</dbReference>
<dbReference type="GeneID" id="822203"/>
<dbReference type="Gramene" id="AT3G26060.1">
    <molecule id="Q9LU86-1"/>
    <property type="protein sequence ID" value="AT3G26060.1"/>
    <property type="gene ID" value="AT3G26060"/>
</dbReference>
<dbReference type="KEGG" id="ath:AT3G26060"/>
<dbReference type="Araport" id="AT3G26060"/>
<dbReference type="TAIR" id="AT3G26060">
    <property type="gene designation" value="PRXQ"/>
</dbReference>
<dbReference type="eggNOG" id="KOG0855">
    <property type="taxonomic scope" value="Eukaryota"/>
</dbReference>
<dbReference type="InParanoid" id="Q9LU86"/>
<dbReference type="OrthoDB" id="338622at2759"/>
<dbReference type="PhylomeDB" id="Q9LU86"/>
<dbReference type="BioCyc" id="ARA:AT3G26060-MONOMER"/>
<dbReference type="CD-CODE" id="4299E36E">
    <property type="entry name" value="Nucleolus"/>
</dbReference>
<dbReference type="PRO" id="PR:Q9LU86"/>
<dbReference type="Proteomes" id="UP000006548">
    <property type="component" value="Chromosome 3"/>
</dbReference>
<dbReference type="ExpressionAtlas" id="Q9LU86">
    <property type="expression patterns" value="baseline and differential"/>
</dbReference>
<dbReference type="GO" id="GO:0009543">
    <property type="term" value="C:chloroplast thylakoid lumen"/>
    <property type="evidence" value="ECO:0007669"/>
    <property type="project" value="UniProtKB-SubCell"/>
</dbReference>
<dbReference type="GO" id="GO:0140824">
    <property type="term" value="F:thioredoxin-dependent peroxiredoxin activity"/>
    <property type="evidence" value="ECO:0007669"/>
    <property type="project" value="UniProtKB-EC"/>
</dbReference>
<dbReference type="CDD" id="cd03017">
    <property type="entry name" value="PRX_BCP"/>
    <property type="match status" value="1"/>
</dbReference>
<dbReference type="FunFam" id="3.40.30.10:FF:000122">
    <property type="entry name" value="Peroxiredoxin Q chloroplastic"/>
    <property type="match status" value="1"/>
</dbReference>
<dbReference type="Gene3D" id="3.40.30.10">
    <property type="entry name" value="Glutaredoxin"/>
    <property type="match status" value="1"/>
</dbReference>
<dbReference type="InterPro" id="IPR000866">
    <property type="entry name" value="AhpC/TSA"/>
</dbReference>
<dbReference type="InterPro" id="IPR050924">
    <property type="entry name" value="Peroxiredoxin_BCP/PrxQ"/>
</dbReference>
<dbReference type="InterPro" id="IPR036249">
    <property type="entry name" value="Thioredoxin-like_sf"/>
</dbReference>
<dbReference type="InterPro" id="IPR013766">
    <property type="entry name" value="Thioredoxin_domain"/>
</dbReference>
<dbReference type="PANTHER" id="PTHR42801:SF4">
    <property type="entry name" value="AHPC_TSA FAMILY PROTEIN"/>
    <property type="match status" value="1"/>
</dbReference>
<dbReference type="PANTHER" id="PTHR42801">
    <property type="entry name" value="THIOREDOXIN-DEPENDENT PEROXIDE REDUCTASE"/>
    <property type="match status" value="1"/>
</dbReference>
<dbReference type="Pfam" id="PF00578">
    <property type="entry name" value="AhpC-TSA"/>
    <property type="match status" value="1"/>
</dbReference>
<dbReference type="SUPFAM" id="SSF52833">
    <property type="entry name" value="Thioredoxin-like"/>
    <property type="match status" value="1"/>
</dbReference>
<dbReference type="PROSITE" id="PS51352">
    <property type="entry name" value="THIOREDOXIN_2"/>
    <property type="match status" value="1"/>
</dbReference>
<evidence type="ECO:0000250" key="1">
    <source>
        <dbReference type="UniProtKB" id="P0AE52"/>
    </source>
</evidence>
<evidence type="ECO:0000255" key="2"/>
<evidence type="ECO:0000255" key="3">
    <source>
        <dbReference type="PROSITE-ProRule" id="PRU00691"/>
    </source>
</evidence>
<evidence type="ECO:0000269" key="4">
    <source>
    </source>
</evidence>
<evidence type="ECO:0000269" key="5">
    <source>
    </source>
</evidence>
<evidence type="ECO:0000269" key="6">
    <source>
    </source>
</evidence>
<evidence type="ECO:0000269" key="7">
    <source>
    </source>
</evidence>
<evidence type="ECO:0000269" key="8">
    <source>
    </source>
</evidence>
<evidence type="ECO:0000269" key="9">
    <source ref="6"/>
</evidence>
<evidence type="ECO:0000305" key="10"/>
<proteinExistence type="evidence at protein level"/>
<name>PRXQ_ARATH</name>
<reference key="1">
    <citation type="journal article" date="2000" name="DNA Res.">
        <title>Structural analysis of Arabidopsis thaliana chromosome 3. I. Sequence features of the regions of 4,504,864 bp covered by sixty P1 and TAC clones.</title>
        <authorList>
            <person name="Sato S."/>
            <person name="Nakamura Y."/>
            <person name="Kaneko T."/>
            <person name="Katoh T."/>
            <person name="Asamizu E."/>
            <person name="Tabata S."/>
        </authorList>
    </citation>
    <scope>NUCLEOTIDE SEQUENCE [LARGE SCALE GENOMIC DNA]</scope>
    <source>
        <strain>cv. Columbia</strain>
    </source>
</reference>
<reference key="2">
    <citation type="journal article" date="2017" name="Plant J.">
        <title>Araport11: a complete reannotation of the Arabidopsis thaliana reference genome.</title>
        <authorList>
            <person name="Cheng C.Y."/>
            <person name="Krishnakumar V."/>
            <person name="Chan A.P."/>
            <person name="Thibaud-Nissen F."/>
            <person name="Schobel S."/>
            <person name="Town C.D."/>
        </authorList>
    </citation>
    <scope>GENOME REANNOTATION</scope>
    <source>
        <strain>cv. Columbia</strain>
    </source>
</reference>
<reference key="3">
    <citation type="journal article" date="2003" name="Science">
        <title>Empirical analysis of transcriptional activity in the Arabidopsis genome.</title>
        <authorList>
            <person name="Yamada K."/>
            <person name="Lim J."/>
            <person name="Dale J.M."/>
            <person name="Chen H."/>
            <person name="Shinn P."/>
            <person name="Palm C.J."/>
            <person name="Southwick A.M."/>
            <person name="Wu H.C."/>
            <person name="Kim C.J."/>
            <person name="Nguyen M."/>
            <person name="Pham P.K."/>
            <person name="Cheuk R.F."/>
            <person name="Karlin-Newmann G."/>
            <person name="Liu S.X."/>
            <person name="Lam B."/>
            <person name="Sakano H."/>
            <person name="Wu T."/>
            <person name="Yu G."/>
            <person name="Miranda M."/>
            <person name="Quach H.L."/>
            <person name="Tripp M."/>
            <person name="Chang C.H."/>
            <person name="Lee J.M."/>
            <person name="Toriumi M.J."/>
            <person name="Chan M.M."/>
            <person name="Tang C.C."/>
            <person name="Onodera C.S."/>
            <person name="Deng J.M."/>
            <person name="Akiyama K."/>
            <person name="Ansari Y."/>
            <person name="Arakawa T."/>
            <person name="Banh J."/>
            <person name="Banno F."/>
            <person name="Bowser L."/>
            <person name="Brooks S.Y."/>
            <person name="Carninci P."/>
            <person name="Chao Q."/>
            <person name="Choy N."/>
            <person name="Enju A."/>
            <person name="Goldsmith A.D."/>
            <person name="Gurjal M."/>
            <person name="Hansen N.F."/>
            <person name="Hayashizaki Y."/>
            <person name="Johnson-Hopson C."/>
            <person name="Hsuan V.W."/>
            <person name="Iida K."/>
            <person name="Karnes M."/>
            <person name="Khan S."/>
            <person name="Koesema E."/>
            <person name="Ishida J."/>
            <person name="Jiang P.X."/>
            <person name="Jones T."/>
            <person name="Kawai J."/>
            <person name="Kamiya A."/>
            <person name="Meyers C."/>
            <person name="Nakajima M."/>
            <person name="Narusaka M."/>
            <person name="Seki M."/>
            <person name="Sakurai T."/>
            <person name="Satou M."/>
            <person name="Tamse R."/>
            <person name="Vaysberg M."/>
            <person name="Wallender E.K."/>
            <person name="Wong C."/>
            <person name="Yamamura Y."/>
            <person name="Yuan S."/>
            <person name="Shinozaki K."/>
            <person name="Davis R.W."/>
            <person name="Theologis A."/>
            <person name="Ecker J.R."/>
        </authorList>
    </citation>
    <scope>NUCLEOTIDE SEQUENCE [LARGE SCALE MRNA]</scope>
    <source>
        <strain>cv. Columbia</strain>
    </source>
</reference>
<reference key="4">
    <citation type="journal article" date="2003" name="Photosyn. Res.">
        <title>The proteome of the chloroplast lumen of higher plants.</title>
        <authorList>
            <person name="Kieselbach T."/>
            <person name="Schroeder W.P."/>
        </authorList>
    </citation>
    <scope>PROTEIN SEQUENCE OF 68-79</scope>
    <scope>SUBCELLULAR LOCATION</scope>
</reference>
<reference key="5">
    <citation type="journal article" date="2002" name="Plant Cell">
        <title>The plastidic 2-cysteine peroxiredoxin is a target for a thioredoxin involved in the protection of the photosynthetic apparatus against oxidative damage.</title>
        <authorList>
            <person name="Broin M."/>
            <person name="Cuine S."/>
            <person name="Eymery F."/>
            <person name="Rey P."/>
        </authorList>
    </citation>
    <scope>FUNCTION</scope>
    <scope>INTERACTION WITH CDSP32</scope>
</reference>
<reference key="6">
    <citation type="journal article" date="2002" name="Plant Physiol. Biochem.">
        <title>Type II peroxiredoxin C, a member of the peroxiredoxin family of Arabidopsis thaliana: its expression and activity in comparison with other peroxiredoxins.</title>
        <authorList>
            <person name="Horling F."/>
            <person name="Koenig J."/>
            <person name="Dietz K.-J."/>
        </authorList>
    </citation>
    <scope>TISSUE SPECIFICITY</scope>
    <scope>INDUCTION</scope>
</reference>
<reference key="7">
    <citation type="journal article" date="2003" name="Plant Physiol.">
        <title>Divergent light-, ascorbate-, and oxidative stress-dependent regulation of expression of the peroxiredoxin gene family in Arabidopsis.</title>
        <authorList>
            <person name="Horling F."/>
            <person name="Lamkemeyer P."/>
            <person name="Koenig J."/>
            <person name="Finkemeier I."/>
            <person name="Kandlbinder A."/>
            <person name="Baier M."/>
            <person name="Dietz K.-J."/>
        </authorList>
    </citation>
    <scope>INDUCTION</scope>
</reference>
<reference key="8">
    <citation type="journal article" date="2005" name="Free Radic. Biol. Med.">
        <title>The plant multigenic family of thiol peroxidases.</title>
        <authorList>
            <person name="Rouhier N."/>
            <person name="Jacquot J.-P."/>
        </authorList>
    </citation>
    <scope>GENE FAMILY ORGANIZATION</scope>
    <scope>NOMENCLATURE</scope>
</reference>
<reference key="9">
    <citation type="journal article" date="2006" name="FEBS Lett.">
        <title>The Prx Q protein of Arabidopsis thaliana is a member of the luminal chloroplast proteome.</title>
        <authorList>
            <person name="Petersson U.A."/>
            <person name="Kieselbach T."/>
            <person name="Garcia-Cerdan J.G."/>
            <person name="Schroeder W.P."/>
        </authorList>
    </citation>
    <scope>SUBCELLULAR LOCATION</scope>
</reference>
<reference key="10">
    <citation type="journal article" date="2006" name="Plant J.">
        <title>Peroxiredoxin Q of Arabidopsis thaliana is attached to the thylakoids and functions in context of photosynthesis.</title>
        <authorList>
            <person name="Lamkemeyer P."/>
            <person name="Laxa M."/>
            <person name="Collin V."/>
            <person name="Li W."/>
            <person name="Finkemeier I."/>
            <person name="Schoettler M.A."/>
            <person name="Holtkamp V."/>
            <person name="Tognetti V.B."/>
            <person name="Issakidis-Bourguet E."/>
            <person name="Kandlbinder A."/>
            <person name="Weis E."/>
            <person name="Miginiac-Maslow M."/>
            <person name="Dietz K.-J."/>
        </authorList>
    </citation>
    <scope>FUNCTION</scope>
    <scope>SUBCELLULAR LOCATION</scope>
    <scope>TISSUE SPECIFICITY</scope>
</reference>
<reference key="11">
    <citation type="journal article" date="2011" name="Biochim. Biophys. Acta">
        <title>Extraordinary mus-ms backbone dynamics in Arabidopsis thaliana peroxiredoxin Q.</title>
        <authorList>
            <person name="Aden J."/>
            <person name="Wallgren M."/>
            <person name="Storm P."/>
            <person name="Weise C.F."/>
            <person name="Christiansen A."/>
            <person name="Schroder W.P."/>
            <person name="Funk C."/>
            <person name="Wolf-Watz M."/>
        </authorList>
    </citation>
    <scope>FUNCTION</scope>
    <scope>3D-STRUCTURE MODELING</scope>
    <scope>SUBUNIT</scope>
    <scope>CATALYTIC ACTIVITY</scope>
    <scope>BIOPHYSICOCHEMICAL PROPERTIES</scope>
</reference>
<organism>
    <name type="scientific">Arabidopsis thaliana</name>
    <name type="common">Mouse-ear cress</name>
    <dbReference type="NCBI Taxonomy" id="3702"/>
    <lineage>
        <taxon>Eukaryota</taxon>
        <taxon>Viridiplantae</taxon>
        <taxon>Streptophyta</taxon>
        <taxon>Embryophyta</taxon>
        <taxon>Tracheophyta</taxon>
        <taxon>Spermatophyta</taxon>
        <taxon>Magnoliopsida</taxon>
        <taxon>eudicotyledons</taxon>
        <taxon>Gunneridae</taxon>
        <taxon>Pentapetalae</taxon>
        <taxon>rosids</taxon>
        <taxon>malvids</taxon>
        <taxon>Brassicales</taxon>
        <taxon>Brassicaceae</taxon>
        <taxon>Camelineae</taxon>
        <taxon>Arabidopsis</taxon>
    </lineage>
</organism>
<protein>
    <recommendedName>
        <fullName>Peroxiredoxin Q, chloroplastic</fullName>
        <ecNumber evidence="8">1.11.1.24</ecNumber>
    </recommendedName>
    <alternativeName>
        <fullName>Thioredoxin peroxidase</fullName>
    </alternativeName>
    <alternativeName>
        <fullName evidence="10">Thioredoxin-dependent peroxiredoxin Q</fullName>
    </alternativeName>
</protein>
<sequence>MAASSSSFTLCNHTTLRTLPLRKTLVTKTQFSVPTKSSESNFFGSTLTHSSYISPVSSSSLKGLIFAKVNKGQAAPDFTLKDQNGKPVSLKKYKGKPVVLYFYPADETPGCTKQACAFRDSYEKFKKAGAEVIGISGDDSASHKAFASKYKLPYTLLSDEGNKVRKDWGVPGDLFGALPGRQTYVLDKNGVVQLIYNNQFQPEKHIDETLKFLKAA</sequence>
<accession>Q9LU86</accession>
<gene>
    <name type="primary">PRXQ</name>
    <name type="ordered locus">At3g26060</name>
    <name type="ORF">MPE11_21</name>
</gene>